<evidence type="ECO:0000250" key="1">
    <source>
        <dbReference type="UniProtKB" id="Q16775"/>
    </source>
</evidence>
<evidence type="ECO:0000255" key="2"/>
<evidence type="ECO:0000303" key="3">
    <source>
    </source>
</evidence>
<evidence type="ECO:0000303" key="4">
    <source>
    </source>
</evidence>
<evidence type="ECO:0000305" key="5"/>
<evidence type="ECO:0007744" key="6">
    <source>
    </source>
</evidence>
<evidence type="ECO:0007744" key="7">
    <source>
    </source>
</evidence>
<feature type="transit peptide" description="Mitochondrion" evidence="2">
    <location>
        <begin position="1"/>
        <end position="24"/>
    </location>
</feature>
<feature type="chain" id="PRO_0000192343" description="Hydroxyacylglutathione hydrolase, mitochondrial">
    <location>
        <begin position="25"/>
        <end position="309"/>
    </location>
</feature>
<feature type="binding site" evidence="1">
    <location>
        <position position="103"/>
    </location>
    <ligand>
        <name>Zn(2+)</name>
        <dbReference type="ChEBI" id="CHEBI:29105"/>
        <label>1</label>
    </ligand>
</feature>
<feature type="binding site" evidence="1">
    <location>
        <position position="105"/>
    </location>
    <ligand>
        <name>Zn(2+)</name>
        <dbReference type="ChEBI" id="CHEBI:29105"/>
        <label>1</label>
    </ligand>
</feature>
<feature type="binding site" evidence="1">
    <location>
        <position position="107"/>
    </location>
    <ligand>
        <name>Zn(2+)</name>
        <dbReference type="ChEBI" id="CHEBI:29105"/>
        <label>2</label>
    </ligand>
</feature>
<feature type="binding site" evidence="1">
    <location>
        <position position="108"/>
    </location>
    <ligand>
        <name>Zn(2+)</name>
        <dbReference type="ChEBI" id="CHEBI:29105"/>
        <label>2</label>
    </ligand>
</feature>
<feature type="binding site" evidence="1">
    <location>
        <position position="159"/>
    </location>
    <ligand>
        <name>Zn(2+)</name>
        <dbReference type="ChEBI" id="CHEBI:29105"/>
        <label>1</label>
    </ligand>
</feature>
<feature type="binding site" evidence="1">
    <location>
        <position position="183"/>
    </location>
    <ligand>
        <name>Zn(2+)</name>
        <dbReference type="ChEBI" id="CHEBI:29105"/>
        <label>1</label>
    </ligand>
</feature>
<feature type="binding site" evidence="1">
    <location>
        <position position="183"/>
    </location>
    <ligand>
        <name>Zn(2+)</name>
        <dbReference type="ChEBI" id="CHEBI:29105"/>
        <label>2</label>
    </ligand>
</feature>
<feature type="binding site" evidence="1">
    <location>
        <begin position="192"/>
        <end position="194"/>
    </location>
    <ligand>
        <name>substrate</name>
    </ligand>
</feature>
<feature type="binding site" evidence="1">
    <location>
        <begin position="222"/>
        <end position="224"/>
    </location>
    <ligand>
        <name>substrate</name>
    </ligand>
</feature>
<feature type="binding site" evidence="1">
    <location>
        <position position="222"/>
    </location>
    <ligand>
        <name>Zn(2+)</name>
        <dbReference type="ChEBI" id="CHEBI:29105"/>
        <label>2</label>
    </ligand>
</feature>
<feature type="binding site" evidence="1">
    <location>
        <begin position="298"/>
        <end position="301"/>
    </location>
    <ligand>
        <name>substrate</name>
    </ligand>
</feature>
<feature type="modified residue" description="N6-acetyllysine" evidence="6">
    <location>
        <position position="90"/>
    </location>
</feature>
<feature type="modified residue" description="N6-acetyllysine" evidence="6">
    <location>
        <position position="117"/>
    </location>
</feature>
<feature type="modified residue" description="N6-acetyllysine; alternate" evidence="1">
    <location>
        <position position="230"/>
    </location>
</feature>
<feature type="modified residue" description="N6-succinyllysine; alternate" evidence="7">
    <location>
        <position position="230"/>
    </location>
</feature>
<feature type="splice variant" id="VSP_037931" description="In isoform 2." evidence="3 4">
    <location>
        <begin position="1"/>
        <end position="49"/>
    </location>
</feature>
<feature type="sequence conflict" description="In Ref. 1; BAE27615/BAE29657/BAE30223/BAE31462/BAE38377." evidence="5" ref="1">
    <original>H</original>
    <variation>R</variation>
    <location>
        <position position="93"/>
    </location>
</feature>
<feature type="sequence conflict" description="In Ref. 1; BAE38377." evidence="5" ref="1">
    <original>G</original>
    <variation>E</variation>
    <location>
        <position position="147"/>
    </location>
</feature>
<name>GLO2_MOUSE</name>
<accession>Q99KB8</accession>
<accession>Q3TMR4</accession>
<accession>Q3UCF6</accession>
<accession>Q8WUR9</accession>
<keyword id="KW-0007">Acetylation</keyword>
<keyword id="KW-0024">Alternative initiation</keyword>
<keyword id="KW-0025">Alternative splicing</keyword>
<keyword id="KW-0963">Cytoplasm</keyword>
<keyword id="KW-0378">Hydrolase</keyword>
<keyword id="KW-0479">Metal-binding</keyword>
<keyword id="KW-0496">Mitochondrion</keyword>
<keyword id="KW-1185">Reference proteome</keyword>
<keyword id="KW-0809">Transit peptide</keyword>
<keyword id="KW-0862">Zinc</keyword>
<dbReference type="EC" id="3.1.2.6" evidence="1"/>
<dbReference type="EMBL" id="AK147022">
    <property type="protein sequence ID" value="BAE27615.1"/>
    <property type="status" value="ALT_INIT"/>
    <property type="molecule type" value="mRNA"/>
</dbReference>
<dbReference type="EMBL" id="AK150557">
    <property type="protein sequence ID" value="BAE29657.1"/>
    <property type="status" value="ALT_INIT"/>
    <property type="molecule type" value="mRNA"/>
</dbReference>
<dbReference type="EMBL" id="AK151231">
    <property type="protein sequence ID" value="BAE30223.1"/>
    <property type="status" value="ALT_INIT"/>
    <property type="molecule type" value="mRNA"/>
</dbReference>
<dbReference type="EMBL" id="AK152742">
    <property type="protein sequence ID" value="BAE31462.1"/>
    <property type="status" value="ALT_INIT"/>
    <property type="molecule type" value="mRNA"/>
</dbReference>
<dbReference type="EMBL" id="AK165777">
    <property type="protein sequence ID" value="BAE38377.1"/>
    <property type="molecule type" value="mRNA"/>
</dbReference>
<dbReference type="EMBL" id="BC004749">
    <property type="protein sequence ID" value="AAH04749.1"/>
    <property type="status" value="ALT_INIT"/>
    <property type="molecule type" value="mRNA"/>
</dbReference>
<dbReference type="EMBL" id="BC019817">
    <property type="protein sequence ID" value="AAH19817.1"/>
    <property type="status" value="ALT_INIT"/>
    <property type="molecule type" value="mRNA"/>
</dbReference>
<dbReference type="CCDS" id="CCDS28499.2">
    <molecule id="Q99KB8-1"/>
</dbReference>
<dbReference type="CCDS" id="CCDS50021.1">
    <molecule id="Q99KB8-2"/>
</dbReference>
<dbReference type="RefSeq" id="NP_001153098.1">
    <property type="nucleotide sequence ID" value="NM_001159626.1"/>
</dbReference>
<dbReference type="RefSeq" id="NP_077246.2">
    <property type="nucleotide sequence ID" value="NM_024284.2"/>
</dbReference>
<dbReference type="RefSeq" id="XP_006523723.1">
    <property type="nucleotide sequence ID" value="XM_006523660.2"/>
</dbReference>
<dbReference type="RefSeq" id="XP_006523724.1">
    <property type="nucleotide sequence ID" value="XM_006523661.1"/>
</dbReference>
<dbReference type="SMR" id="Q99KB8"/>
<dbReference type="BioGRID" id="199949">
    <property type="interactions" value="5"/>
</dbReference>
<dbReference type="FunCoup" id="Q99KB8">
    <property type="interactions" value="1651"/>
</dbReference>
<dbReference type="STRING" id="10090.ENSMUSP00000113051"/>
<dbReference type="GlyGen" id="Q99KB8">
    <property type="glycosylation" value="1 site, 1 O-linked glycan (1 site)"/>
</dbReference>
<dbReference type="iPTMnet" id="Q99KB8"/>
<dbReference type="PhosphoSitePlus" id="Q99KB8"/>
<dbReference type="SwissPalm" id="Q99KB8"/>
<dbReference type="REPRODUCTION-2DPAGE" id="Q99KB8"/>
<dbReference type="CPTAC" id="non-CPTAC-3647"/>
<dbReference type="jPOST" id="Q99KB8"/>
<dbReference type="PaxDb" id="10090-ENSMUSP00000113051"/>
<dbReference type="PeptideAtlas" id="Q99KB8"/>
<dbReference type="ProteomicsDB" id="266810">
    <molecule id="Q99KB8-1"/>
</dbReference>
<dbReference type="ProteomicsDB" id="266811">
    <molecule id="Q99KB8-2"/>
</dbReference>
<dbReference type="Pumba" id="Q99KB8"/>
<dbReference type="DNASU" id="14651"/>
<dbReference type="GeneID" id="14651"/>
<dbReference type="KEGG" id="mmu:14651"/>
<dbReference type="AGR" id="MGI:95745"/>
<dbReference type="CTD" id="3029"/>
<dbReference type="MGI" id="MGI:95745">
    <property type="gene designation" value="Hagh"/>
</dbReference>
<dbReference type="eggNOG" id="KOG0813">
    <property type="taxonomic scope" value="Eukaryota"/>
</dbReference>
<dbReference type="InParanoid" id="Q99KB8"/>
<dbReference type="OrthoDB" id="515692at2759"/>
<dbReference type="PhylomeDB" id="Q99KB8"/>
<dbReference type="Reactome" id="R-MMU-70268">
    <property type="pathway name" value="Pyruvate metabolism"/>
</dbReference>
<dbReference type="SABIO-RK" id="Q99KB8"/>
<dbReference type="UniPathway" id="UPA00619">
    <property type="reaction ID" value="UER00676"/>
</dbReference>
<dbReference type="BioGRID-ORCS" id="14651">
    <property type="hits" value="4 hits in 77 CRISPR screens"/>
</dbReference>
<dbReference type="ChiTaRS" id="Hagh">
    <property type="organism name" value="mouse"/>
</dbReference>
<dbReference type="PRO" id="PR:Q99KB8"/>
<dbReference type="Proteomes" id="UP000000589">
    <property type="component" value="Unplaced"/>
</dbReference>
<dbReference type="RNAct" id="Q99KB8">
    <property type="molecule type" value="protein"/>
</dbReference>
<dbReference type="GO" id="GO:0005759">
    <property type="term" value="C:mitochondrial matrix"/>
    <property type="evidence" value="ECO:0007669"/>
    <property type="project" value="UniProtKB-SubCell"/>
</dbReference>
<dbReference type="GO" id="GO:0005739">
    <property type="term" value="C:mitochondrion"/>
    <property type="evidence" value="ECO:0007005"/>
    <property type="project" value="MGI"/>
</dbReference>
<dbReference type="GO" id="GO:0004416">
    <property type="term" value="F:hydroxyacylglutathione hydrolase activity"/>
    <property type="evidence" value="ECO:0000314"/>
    <property type="project" value="MGI"/>
</dbReference>
<dbReference type="GO" id="GO:0046872">
    <property type="term" value="F:metal ion binding"/>
    <property type="evidence" value="ECO:0007669"/>
    <property type="project" value="UniProtKB-KW"/>
</dbReference>
<dbReference type="GO" id="GO:0006750">
    <property type="term" value="P:glutathione biosynthetic process"/>
    <property type="evidence" value="ECO:0000305"/>
    <property type="project" value="MGI"/>
</dbReference>
<dbReference type="GO" id="GO:0019243">
    <property type="term" value="P:methylglyoxal catabolic process to D-lactate via S-lactoyl-glutathione"/>
    <property type="evidence" value="ECO:0000305"/>
    <property type="project" value="MGI"/>
</dbReference>
<dbReference type="CDD" id="cd07723">
    <property type="entry name" value="hydroxyacylglutathione_hydrolase_MBL-fold"/>
    <property type="match status" value="1"/>
</dbReference>
<dbReference type="FunFam" id="3.60.15.10:FF:000019">
    <property type="entry name" value="Hydroxyacylglutathione hydrolase, mitochondrial"/>
    <property type="match status" value="1"/>
</dbReference>
<dbReference type="Gene3D" id="3.60.15.10">
    <property type="entry name" value="Ribonuclease Z/Hydroxyacylglutathione hydrolase-like"/>
    <property type="match status" value="1"/>
</dbReference>
<dbReference type="HAMAP" id="MF_01374">
    <property type="entry name" value="Glyoxalase_2"/>
    <property type="match status" value="1"/>
</dbReference>
<dbReference type="InterPro" id="IPR035680">
    <property type="entry name" value="Clx_II_MBL"/>
</dbReference>
<dbReference type="InterPro" id="IPR032282">
    <property type="entry name" value="HAGH_C"/>
</dbReference>
<dbReference type="InterPro" id="IPR017782">
    <property type="entry name" value="Hydroxyacylglutathione_Hdrlase"/>
</dbReference>
<dbReference type="InterPro" id="IPR001279">
    <property type="entry name" value="Metallo-B-lactamas"/>
</dbReference>
<dbReference type="InterPro" id="IPR036866">
    <property type="entry name" value="RibonucZ/Hydroxyglut_hydro"/>
</dbReference>
<dbReference type="NCBIfam" id="TIGR03413">
    <property type="entry name" value="GSH_gloB"/>
    <property type="match status" value="1"/>
</dbReference>
<dbReference type="PANTHER" id="PTHR11935">
    <property type="entry name" value="BETA LACTAMASE DOMAIN"/>
    <property type="match status" value="1"/>
</dbReference>
<dbReference type="PANTHER" id="PTHR11935:SF80">
    <property type="entry name" value="HYDROXYACYLGLUTATHIONE HYDROLASE, MITOCHONDRIAL"/>
    <property type="match status" value="1"/>
</dbReference>
<dbReference type="Pfam" id="PF16123">
    <property type="entry name" value="HAGH_C"/>
    <property type="match status" value="1"/>
</dbReference>
<dbReference type="Pfam" id="PF00753">
    <property type="entry name" value="Lactamase_B"/>
    <property type="match status" value="1"/>
</dbReference>
<dbReference type="PIRSF" id="PIRSF005457">
    <property type="entry name" value="Glx"/>
    <property type="match status" value="1"/>
</dbReference>
<dbReference type="SMART" id="SM00849">
    <property type="entry name" value="Lactamase_B"/>
    <property type="match status" value="1"/>
</dbReference>
<dbReference type="SUPFAM" id="SSF56281">
    <property type="entry name" value="Metallo-hydrolase/oxidoreductase"/>
    <property type="match status" value="1"/>
</dbReference>
<gene>
    <name type="primary">Hagh</name>
    <name type="synonym">Glo2</name>
</gene>
<organism>
    <name type="scientific">Mus musculus</name>
    <name type="common">Mouse</name>
    <dbReference type="NCBI Taxonomy" id="10090"/>
    <lineage>
        <taxon>Eukaryota</taxon>
        <taxon>Metazoa</taxon>
        <taxon>Chordata</taxon>
        <taxon>Craniata</taxon>
        <taxon>Vertebrata</taxon>
        <taxon>Euteleostomi</taxon>
        <taxon>Mammalia</taxon>
        <taxon>Eutheria</taxon>
        <taxon>Euarchontoglires</taxon>
        <taxon>Glires</taxon>
        <taxon>Rodentia</taxon>
        <taxon>Myomorpha</taxon>
        <taxon>Muroidea</taxon>
        <taxon>Muridae</taxon>
        <taxon>Murinae</taxon>
        <taxon>Mus</taxon>
        <taxon>Mus</taxon>
    </lineage>
</organism>
<protein>
    <recommendedName>
        <fullName>Hydroxyacylglutathione hydrolase, mitochondrial</fullName>
        <ecNumber evidence="1">3.1.2.6</ecNumber>
    </recommendedName>
    <alternativeName>
        <fullName>Glyoxalase II</fullName>
        <shortName>Glx II</shortName>
    </alternativeName>
</protein>
<proteinExistence type="evidence at protein level"/>
<reference key="1">
    <citation type="journal article" date="2005" name="Science">
        <title>The transcriptional landscape of the mammalian genome.</title>
        <authorList>
            <person name="Carninci P."/>
            <person name="Kasukawa T."/>
            <person name="Katayama S."/>
            <person name="Gough J."/>
            <person name="Frith M.C."/>
            <person name="Maeda N."/>
            <person name="Oyama R."/>
            <person name="Ravasi T."/>
            <person name="Lenhard B."/>
            <person name="Wells C."/>
            <person name="Kodzius R."/>
            <person name="Shimokawa K."/>
            <person name="Bajic V.B."/>
            <person name="Brenner S.E."/>
            <person name="Batalov S."/>
            <person name="Forrest A.R."/>
            <person name="Zavolan M."/>
            <person name="Davis M.J."/>
            <person name="Wilming L.G."/>
            <person name="Aidinis V."/>
            <person name="Allen J.E."/>
            <person name="Ambesi-Impiombato A."/>
            <person name="Apweiler R."/>
            <person name="Aturaliya R.N."/>
            <person name="Bailey T.L."/>
            <person name="Bansal M."/>
            <person name="Baxter L."/>
            <person name="Beisel K.W."/>
            <person name="Bersano T."/>
            <person name="Bono H."/>
            <person name="Chalk A.M."/>
            <person name="Chiu K.P."/>
            <person name="Choudhary V."/>
            <person name="Christoffels A."/>
            <person name="Clutterbuck D.R."/>
            <person name="Crowe M.L."/>
            <person name="Dalla E."/>
            <person name="Dalrymple B.P."/>
            <person name="de Bono B."/>
            <person name="Della Gatta G."/>
            <person name="di Bernardo D."/>
            <person name="Down T."/>
            <person name="Engstrom P."/>
            <person name="Fagiolini M."/>
            <person name="Faulkner G."/>
            <person name="Fletcher C.F."/>
            <person name="Fukushima T."/>
            <person name="Furuno M."/>
            <person name="Futaki S."/>
            <person name="Gariboldi M."/>
            <person name="Georgii-Hemming P."/>
            <person name="Gingeras T.R."/>
            <person name="Gojobori T."/>
            <person name="Green R.E."/>
            <person name="Gustincich S."/>
            <person name="Harbers M."/>
            <person name="Hayashi Y."/>
            <person name="Hensch T.K."/>
            <person name="Hirokawa N."/>
            <person name="Hill D."/>
            <person name="Huminiecki L."/>
            <person name="Iacono M."/>
            <person name="Ikeo K."/>
            <person name="Iwama A."/>
            <person name="Ishikawa T."/>
            <person name="Jakt M."/>
            <person name="Kanapin A."/>
            <person name="Katoh M."/>
            <person name="Kawasawa Y."/>
            <person name="Kelso J."/>
            <person name="Kitamura H."/>
            <person name="Kitano H."/>
            <person name="Kollias G."/>
            <person name="Krishnan S.P."/>
            <person name="Kruger A."/>
            <person name="Kummerfeld S.K."/>
            <person name="Kurochkin I.V."/>
            <person name="Lareau L.F."/>
            <person name="Lazarevic D."/>
            <person name="Lipovich L."/>
            <person name="Liu J."/>
            <person name="Liuni S."/>
            <person name="McWilliam S."/>
            <person name="Madan Babu M."/>
            <person name="Madera M."/>
            <person name="Marchionni L."/>
            <person name="Matsuda H."/>
            <person name="Matsuzawa S."/>
            <person name="Miki H."/>
            <person name="Mignone F."/>
            <person name="Miyake S."/>
            <person name="Morris K."/>
            <person name="Mottagui-Tabar S."/>
            <person name="Mulder N."/>
            <person name="Nakano N."/>
            <person name="Nakauchi H."/>
            <person name="Ng P."/>
            <person name="Nilsson R."/>
            <person name="Nishiguchi S."/>
            <person name="Nishikawa S."/>
            <person name="Nori F."/>
            <person name="Ohara O."/>
            <person name="Okazaki Y."/>
            <person name="Orlando V."/>
            <person name="Pang K.C."/>
            <person name="Pavan W.J."/>
            <person name="Pavesi G."/>
            <person name="Pesole G."/>
            <person name="Petrovsky N."/>
            <person name="Piazza S."/>
            <person name="Reed J."/>
            <person name="Reid J.F."/>
            <person name="Ring B.Z."/>
            <person name="Ringwald M."/>
            <person name="Rost B."/>
            <person name="Ruan Y."/>
            <person name="Salzberg S.L."/>
            <person name="Sandelin A."/>
            <person name="Schneider C."/>
            <person name="Schoenbach C."/>
            <person name="Sekiguchi K."/>
            <person name="Semple C.A."/>
            <person name="Seno S."/>
            <person name="Sessa L."/>
            <person name="Sheng Y."/>
            <person name="Shibata Y."/>
            <person name="Shimada H."/>
            <person name="Shimada K."/>
            <person name="Silva D."/>
            <person name="Sinclair B."/>
            <person name="Sperling S."/>
            <person name="Stupka E."/>
            <person name="Sugiura K."/>
            <person name="Sultana R."/>
            <person name="Takenaka Y."/>
            <person name="Taki K."/>
            <person name="Tammoja K."/>
            <person name="Tan S.L."/>
            <person name="Tang S."/>
            <person name="Taylor M.S."/>
            <person name="Tegner J."/>
            <person name="Teichmann S.A."/>
            <person name="Ueda H.R."/>
            <person name="van Nimwegen E."/>
            <person name="Verardo R."/>
            <person name="Wei C.L."/>
            <person name="Yagi K."/>
            <person name="Yamanishi H."/>
            <person name="Zabarovsky E."/>
            <person name="Zhu S."/>
            <person name="Zimmer A."/>
            <person name="Hide W."/>
            <person name="Bult C."/>
            <person name="Grimmond S.M."/>
            <person name="Teasdale R.D."/>
            <person name="Liu E.T."/>
            <person name="Brusic V."/>
            <person name="Quackenbush J."/>
            <person name="Wahlestedt C."/>
            <person name="Mattick J.S."/>
            <person name="Hume D.A."/>
            <person name="Kai C."/>
            <person name="Sasaki D."/>
            <person name="Tomaru Y."/>
            <person name="Fukuda S."/>
            <person name="Kanamori-Katayama M."/>
            <person name="Suzuki M."/>
            <person name="Aoki J."/>
            <person name="Arakawa T."/>
            <person name="Iida J."/>
            <person name="Imamura K."/>
            <person name="Itoh M."/>
            <person name="Kato T."/>
            <person name="Kawaji H."/>
            <person name="Kawagashira N."/>
            <person name="Kawashima T."/>
            <person name="Kojima M."/>
            <person name="Kondo S."/>
            <person name="Konno H."/>
            <person name="Nakano K."/>
            <person name="Ninomiya N."/>
            <person name="Nishio T."/>
            <person name="Okada M."/>
            <person name="Plessy C."/>
            <person name="Shibata K."/>
            <person name="Shiraki T."/>
            <person name="Suzuki S."/>
            <person name="Tagami M."/>
            <person name="Waki K."/>
            <person name="Watahiki A."/>
            <person name="Okamura-Oho Y."/>
            <person name="Suzuki H."/>
            <person name="Kawai J."/>
            <person name="Hayashizaki Y."/>
        </authorList>
    </citation>
    <scope>NUCLEOTIDE SEQUENCE [LARGE SCALE MRNA] (ISOFORMS 1 AND 2)</scope>
    <source>
        <strain>C57BL/6J</strain>
        <tissue>Bone marrow</tissue>
        <tissue>Cerebellum</tissue>
        <tissue>Heart</tissue>
    </source>
</reference>
<reference key="2">
    <citation type="journal article" date="2004" name="Genome Res.">
        <title>The status, quality, and expansion of the NIH full-length cDNA project: the Mammalian Gene Collection (MGC).</title>
        <authorList>
            <consortium name="The MGC Project Team"/>
        </authorList>
    </citation>
    <scope>NUCLEOTIDE SEQUENCE [LARGE SCALE MRNA] (ISOFORMS 1 AND 2)</scope>
    <source>
        <strain>FVB/N</strain>
        <tissue>Liver</tissue>
        <tissue>Mammary tumor</tissue>
    </source>
</reference>
<reference key="3">
    <citation type="journal article" date="2010" name="Cell">
        <title>A tissue-specific atlas of mouse protein phosphorylation and expression.</title>
        <authorList>
            <person name="Huttlin E.L."/>
            <person name="Jedrychowski M.P."/>
            <person name="Elias J.E."/>
            <person name="Goswami T."/>
            <person name="Rad R."/>
            <person name="Beausoleil S.A."/>
            <person name="Villen J."/>
            <person name="Haas W."/>
            <person name="Sowa M.E."/>
            <person name="Gygi S.P."/>
        </authorList>
    </citation>
    <scope>IDENTIFICATION BY MASS SPECTROMETRY [LARGE SCALE ANALYSIS]</scope>
    <source>
        <tissue>Brain</tissue>
        <tissue>Brown adipose tissue</tissue>
        <tissue>Heart</tissue>
        <tissue>Kidney</tissue>
        <tissue>Liver</tissue>
        <tissue>Lung</tissue>
        <tissue>Pancreas</tissue>
        <tissue>Spleen</tissue>
        <tissue>Testis</tissue>
    </source>
</reference>
<reference key="4">
    <citation type="journal article" date="2013" name="Mol. Cell">
        <title>SIRT5-mediated lysine desuccinylation impacts diverse metabolic pathways.</title>
        <authorList>
            <person name="Park J."/>
            <person name="Chen Y."/>
            <person name="Tishkoff D.X."/>
            <person name="Peng C."/>
            <person name="Tan M."/>
            <person name="Dai L."/>
            <person name="Xie Z."/>
            <person name="Zhang Y."/>
            <person name="Zwaans B.M."/>
            <person name="Skinner M.E."/>
            <person name="Lombard D.B."/>
            <person name="Zhao Y."/>
        </authorList>
    </citation>
    <scope>SUCCINYLATION [LARGE SCALE ANALYSIS] AT LYS-230</scope>
    <scope>IDENTIFICATION BY MASS SPECTROMETRY [LARGE SCALE ANALYSIS]</scope>
    <source>
        <tissue>Liver</tissue>
    </source>
</reference>
<reference key="5">
    <citation type="journal article" date="2013" name="Proc. Natl. Acad. Sci. U.S.A.">
        <title>Label-free quantitative proteomics of the lysine acetylome in mitochondria identifies substrates of SIRT3 in metabolic pathways.</title>
        <authorList>
            <person name="Rardin M.J."/>
            <person name="Newman J.C."/>
            <person name="Held J.M."/>
            <person name="Cusack M.P."/>
            <person name="Sorensen D.J."/>
            <person name="Li B."/>
            <person name="Schilling B."/>
            <person name="Mooney S.D."/>
            <person name="Kahn C.R."/>
            <person name="Verdin E."/>
            <person name="Gibson B.W."/>
        </authorList>
    </citation>
    <scope>ACETYLATION [LARGE SCALE ANALYSIS] AT LYS-90 AND LYS-117</scope>
    <scope>IDENTIFICATION BY MASS SPECTROMETRY [LARGE SCALE ANALYSIS]</scope>
    <source>
        <tissue>Liver</tissue>
    </source>
</reference>
<sequence length="309" mass="34084">MVLGRGSLCLRSLSALGATCARRGLGQALLGLSLCHSDFRKNLTVQQDIMKVELLPALTDNYMYLIIDEDTQEAAIVDPVQPQKVIEAAKKHHVKLTTVLTTHHHWDHAGGNEKLVKLEPGLKVYGGDDRIGALTHKVTHLSTLQVGSLSVKCLSTPCHTSGHICYFVSKPGSSEPSAVFTGDTLFVAGCGKFYEGTADEMYKALLEVLGRLPPDTKVYCGHEYTVNNLKFARHVEPGNAAIQEKLAWAKEKYAIGEPTVPSTLAEEFTYNPFMRVKEKTVQQHAGETDPVTTMRAIRREKDQFKVPRD</sequence>
<comment type="function">
    <text evidence="1">Thiolesterase that catalyzes the hydrolysis of S-D-lactoyl-glutathione to form glutathione and D-lactic acid.</text>
</comment>
<comment type="catalytic activity">
    <reaction evidence="1">
        <text>an S-(2-hydroxyacyl)glutathione + H2O = a 2-hydroxy carboxylate + glutathione + H(+)</text>
        <dbReference type="Rhea" id="RHEA:21864"/>
        <dbReference type="ChEBI" id="CHEBI:15377"/>
        <dbReference type="ChEBI" id="CHEBI:15378"/>
        <dbReference type="ChEBI" id="CHEBI:57925"/>
        <dbReference type="ChEBI" id="CHEBI:58896"/>
        <dbReference type="ChEBI" id="CHEBI:71261"/>
        <dbReference type="EC" id="3.1.2.6"/>
    </reaction>
    <physiologicalReaction direction="left-to-right" evidence="1">
        <dbReference type="Rhea" id="RHEA:21865"/>
    </physiologicalReaction>
</comment>
<comment type="catalytic activity">
    <reaction evidence="1">
        <text>(R)-S-lactoylglutathione + H2O = (R)-lactate + glutathione + H(+)</text>
        <dbReference type="Rhea" id="RHEA:25245"/>
        <dbReference type="ChEBI" id="CHEBI:15377"/>
        <dbReference type="ChEBI" id="CHEBI:15378"/>
        <dbReference type="ChEBI" id="CHEBI:16004"/>
        <dbReference type="ChEBI" id="CHEBI:57474"/>
        <dbReference type="ChEBI" id="CHEBI:57925"/>
        <dbReference type="EC" id="3.1.2.6"/>
    </reaction>
    <physiologicalReaction direction="left-to-right" evidence="1">
        <dbReference type="Rhea" id="RHEA:25246"/>
    </physiologicalReaction>
</comment>
<comment type="cofactor">
    <cofactor evidence="1">
        <name>Zn(2+)</name>
        <dbReference type="ChEBI" id="CHEBI:29105"/>
    </cofactor>
    <text evidence="1">Binds 2 Zn(2+) ions per subunit.</text>
</comment>
<comment type="pathway">
    <text>Secondary metabolite metabolism; methylglyoxal degradation; (R)-lactate from methylglyoxal: step 2/2.</text>
</comment>
<comment type="subunit">
    <text evidence="1">Monomer.</text>
</comment>
<comment type="subcellular location">
    <molecule>Isoform 1</molecule>
    <subcellularLocation>
        <location evidence="1">Mitochondrion matrix</location>
    </subcellularLocation>
</comment>
<comment type="subcellular location">
    <molecule>Isoform 2</molecule>
    <subcellularLocation>
        <location evidence="1">Cytoplasm</location>
    </subcellularLocation>
</comment>
<comment type="alternative products">
    <event type="alternative splicing"/>
    <event type="alternative initiation"/>
    <isoform>
        <id>Q99KB8-1</id>
        <name>1</name>
        <sequence type="displayed"/>
    </isoform>
    <isoform>
        <id>Q99KB8-2</id>
        <name>2</name>
        <sequence type="described" ref="VSP_037931"/>
    </isoform>
</comment>
<comment type="miscellaneous">
    <molecule>Isoform 2</molecule>
    <text evidence="5">Produced by alternative splicing. Also produced by alternative initiation at Met-50 of isoform 1. Alternative initiation has been proven in human.</text>
</comment>
<comment type="similarity">
    <text evidence="5">Belongs to the metallo-beta-lactamase superfamily. Glyoxalase II family.</text>
</comment>
<comment type="caution">
    <text evidence="5">Only one single gene encoding glyoxalase II has been identified in vertebrates. In yeast and higher plants, separate genes encode the cytosolic and mitochondrial forms of glyoxalase II.</text>
</comment>
<comment type="sequence caution" evidence="5">
    <conflict type="erroneous initiation">
        <sequence resource="EMBL-CDS" id="AAH04749"/>
    </conflict>
</comment>
<comment type="sequence caution" evidence="5">
    <conflict type="erroneous initiation">
        <sequence resource="EMBL-CDS" id="AAH19817"/>
    </conflict>
</comment>
<comment type="sequence caution" evidence="5">
    <conflict type="erroneous initiation">
        <sequence resource="EMBL-CDS" id="BAE27615"/>
    </conflict>
</comment>
<comment type="sequence caution" evidence="5">
    <conflict type="erroneous initiation">
        <sequence resource="EMBL-CDS" id="BAE29657"/>
    </conflict>
</comment>
<comment type="sequence caution" evidence="5">
    <conflict type="erroneous initiation">
        <sequence resource="EMBL-CDS" id="BAE30223"/>
    </conflict>
</comment>
<comment type="sequence caution" evidence="5">
    <conflict type="erroneous initiation">
        <sequence resource="EMBL-CDS" id="BAE31462"/>
    </conflict>
</comment>